<keyword id="KW-0002">3D-structure</keyword>
<keyword id="KW-0325">Glycoprotein</keyword>
<keyword id="KW-0378">Hydrolase</keyword>
<keyword id="KW-1185">Reference proteome</keyword>
<keyword id="KW-0964">Secreted</keyword>
<keyword id="KW-0719">Serine esterase</keyword>
<keyword id="KW-0732">Signal</keyword>
<keyword id="KW-0879">Wnt signaling pathway</keyword>
<gene>
    <name evidence="11 17" type="primary">Notum</name>
    <name evidence="10" type="synonym">wf</name>
    <name evidence="17" type="ORF">CG13076</name>
</gene>
<organism>
    <name type="scientific">Drosophila melanogaster</name>
    <name type="common">Fruit fly</name>
    <dbReference type="NCBI Taxonomy" id="7227"/>
    <lineage>
        <taxon>Eukaryota</taxon>
        <taxon>Metazoa</taxon>
        <taxon>Ecdysozoa</taxon>
        <taxon>Arthropoda</taxon>
        <taxon>Hexapoda</taxon>
        <taxon>Insecta</taxon>
        <taxon>Pterygota</taxon>
        <taxon>Neoptera</taxon>
        <taxon>Endopterygota</taxon>
        <taxon>Diptera</taxon>
        <taxon>Brachycera</taxon>
        <taxon>Muscomorpha</taxon>
        <taxon>Ephydroidea</taxon>
        <taxon>Drosophilidae</taxon>
        <taxon>Drosophila</taxon>
        <taxon>Sophophora</taxon>
    </lineage>
</organism>
<comment type="function">
    <text evidence="1 7 8 9">Carboxylesterase that acts as a key negative regulator of the Wnt signaling pathway by specifically mediating depalmitoleoylation of WNT proteins. Serine palmitoleoylation of WNT proteins is required for efficient binding to frizzled receptors (PubMed:25731175). Also acts as a regulator of long-range activity of Hedgehog (hh), possibly by regulating the switch between low and high level hh pathway signaling (PubMed:20412775, PubMed:22872085).</text>
</comment>
<comment type="catalytic activity">
    <reaction evidence="1">
        <text>[Wnt protein]-O-(9Z)-hexadecenoyl-L-serine + H2O = [Wnt protein]-L-serine + (9Z)-hexadecenoate + H(+)</text>
        <dbReference type="Rhea" id="RHEA:45340"/>
        <dbReference type="Rhea" id="RHEA-COMP:11170"/>
        <dbReference type="Rhea" id="RHEA-COMP:11171"/>
        <dbReference type="ChEBI" id="CHEBI:15377"/>
        <dbReference type="ChEBI" id="CHEBI:15378"/>
        <dbReference type="ChEBI" id="CHEBI:29999"/>
        <dbReference type="ChEBI" id="CHEBI:32372"/>
        <dbReference type="ChEBI" id="CHEBI:85189"/>
        <dbReference type="EC" id="3.1.1.98"/>
    </reaction>
</comment>
<comment type="subcellular location">
    <subcellularLocation>
        <location evidence="5 6 9">Secreted</location>
    </subcellularLocation>
    <subcellularLocation>
        <location evidence="9">Cell surface</location>
    </subcellularLocation>
    <text evidence="9">Associates with the cell surface via interaction with sulfated CAG chains on glypicans.</text>
</comment>
<comment type="induction">
    <text evidence="5 6">Expression is induced by Wnt.</text>
</comment>
<comment type="similarity">
    <text evidence="13">Belongs to the pectinacetylesterase family. Notum subfamily.</text>
</comment>
<comment type="caution">
    <text evidence="9 14 15 16">The molecular function of NOTUM has remained unclear for many years. It was initially thought to hydrolyze glycosaminoglycan (GAG) chains of glypicans, thereby affecting glypicans ability to interact with Wnt ligands (PubMed:12000788, PubMed:12015973). It was later reported to trigger glypican shedding, by mediating cleavage of their GPI-anchor (PubMed:15469839). However, while NOTUM specifically inhibit the Wnt signaling pathway, more pleiotropic effects would be expected from an enzyme affecting glypicans. It was finally shown that it requires glypicans to suppress Wnt signaling, but does not cleave their GPI-anchor (PubMed:25731175). It acts by mediating depalmitoleoylation of WNT proteins, impairing WNT binding to frizzled receptors (PubMed:25731175).</text>
</comment>
<comment type="online information" name="Protein Spotlight">
    <link uri="https://www.proteinspotlight.org/back_issues/177/"/>
    <text>The art of biocuration - Issue 177 of March 2016</text>
</comment>
<sequence>MAVEQIDKMAAKAGEATNKWIKPQQPLLTLLLLLATFSQLPAVCSSSILDAASLQEKDPLRDTSMNMIQRNYMVMHSASGSGDHSRSLKRANLANTSITCNDGSHAGFYLRKHPSSKKWIVLLEGGWHCFDVRSCRSRWMRLRHLMTSSQWPETRDVGGILSPHPEENPYWHNANHVLIPYCSSDSWSGTRTEPDTSDRENSWRFMGALILRQVIAELIPVGLGRVPGGELMLVGSSAGGMGVMLNLDRIRDFLVNEKKLQITVRGVSDSGWFLDREPYTPAAVASNEAVRQGWKLWQGLLPEECTKSYPTEPWRCYYGYRLYPTLKTPLFVFQWLFDEAQMRVDNVGAPVTPQQWNYIHEMGGALRSSLDNVSAVFAPSCIGHGVLFKRDWVNIKIDDISLPSALRCWEHSTRSRRHDKLKRSTEPSTAVSHPEHANNQRHQRHRQRLQRQKHNNVAQSGGQQRKHNHLSKEEREERKRLRQEQRQRRKQRRRQQQQKKANGGQEHRNKKDNSPKSSNGNDQRKQRRRQQLTAEERQEQRKRRRKAQQQQMKMQREQPAAGVFLEASAPQKTRSSNNASAGTKSKKRHRVPRVPEKCGLRLLERCSWPQCNHSCPTLTNPMTGEEMRFLELLTAFGLDIEAVAAALGVDMHTLNNMERTELVNMLTQQAN</sequence>
<reference key="1">
    <citation type="journal article" date="2002" name="Dev. Cell">
        <title>HSPG modification by the secreted enzyme Notum shapes the Wingless morphogen gradient.</title>
        <authorList>
            <person name="Giraldez A.J."/>
            <person name="Copley R.R."/>
            <person name="Cohen S.M."/>
        </authorList>
    </citation>
    <scope>NUCLEOTIDE SEQUENCE [MRNA]</scope>
    <scope>SUBCELLULAR LOCATION</scope>
    <scope>INDUCTION</scope>
</reference>
<reference key="2">
    <citation type="journal article" date="2002" name="Genes Dev.">
        <title>Wingful, an extracellular feedback inhibitor of Wingless.</title>
        <authorList>
            <person name="Gerlitz O."/>
            <person name="Basler K."/>
        </authorList>
    </citation>
    <scope>NUCLEOTIDE SEQUENCE [MRNA]</scope>
    <scope>SUBCELLULAR LOCATION</scope>
    <scope>INDUCTION</scope>
</reference>
<reference key="3">
    <citation type="journal article" date="2000" name="Science">
        <title>The genome sequence of Drosophila melanogaster.</title>
        <authorList>
            <person name="Adams M.D."/>
            <person name="Celniker S.E."/>
            <person name="Holt R.A."/>
            <person name="Evans C.A."/>
            <person name="Gocayne J.D."/>
            <person name="Amanatides P.G."/>
            <person name="Scherer S.E."/>
            <person name="Li P.W."/>
            <person name="Hoskins R.A."/>
            <person name="Galle R.F."/>
            <person name="George R.A."/>
            <person name="Lewis S.E."/>
            <person name="Richards S."/>
            <person name="Ashburner M."/>
            <person name="Henderson S.N."/>
            <person name="Sutton G.G."/>
            <person name="Wortman J.R."/>
            <person name="Yandell M.D."/>
            <person name="Zhang Q."/>
            <person name="Chen L.X."/>
            <person name="Brandon R.C."/>
            <person name="Rogers Y.-H.C."/>
            <person name="Blazej R.G."/>
            <person name="Champe M."/>
            <person name="Pfeiffer B.D."/>
            <person name="Wan K.H."/>
            <person name="Doyle C."/>
            <person name="Baxter E.G."/>
            <person name="Helt G."/>
            <person name="Nelson C.R."/>
            <person name="Miklos G.L.G."/>
            <person name="Abril J.F."/>
            <person name="Agbayani A."/>
            <person name="An H.-J."/>
            <person name="Andrews-Pfannkoch C."/>
            <person name="Baldwin D."/>
            <person name="Ballew R.M."/>
            <person name="Basu A."/>
            <person name="Baxendale J."/>
            <person name="Bayraktaroglu L."/>
            <person name="Beasley E.M."/>
            <person name="Beeson K.Y."/>
            <person name="Benos P.V."/>
            <person name="Berman B.P."/>
            <person name="Bhandari D."/>
            <person name="Bolshakov S."/>
            <person name="Borkova D."/>
            <person name="Botchan M.R."/>
            <person name="Bouck J."/>
            <person name="Brokstein P."/>
            <person name="Brottier P."/>
            <person name="Burtis K.C."/>
            <person name="Busam D.A."/>
            <person name="Butler H."/>
            <person name="Cadieu E."/>
            <person name="Center A."/>
            <person name="Chandra I."/>
            <person name="Cherry J.M."/>
            <person name="Cawley S."/>
            <person name="Dahlke C."/>
            <person name="Davenport L.B."/>
            <person name="Davies P."/>
            <person name="de Pablos B."/>
            <person name="Delcher A."/>
            <person name="Deng Z."/>
            <person name="Mays A.D."/>
            <person name="Dew I."/>
            <person name="Dietz S.M."/>
            <person name="Dodson K."/>
            <person name="Doup L.E."/>
            <person name="Downes M."/>
            <person name="Dugan-Rocha S."/>
            <person name="Dunkov B.C."/>
            <person name="Dunn P."/>
            <person name="Durbin K.J."/>
            <person name="Evangelista C.C."/>
            <person name="Ferraz C."/>
            <person name="Ferriera S."/>
            <person name="Fleischmann W."/>
            <person name="Fosler C."/>
            <person name="Gabrielian A.E."/>
            <person name="Garg N.S."/>
            <person name="Gelbart W.M."/>
            <person name="Glasser K."/>
            <person name="Glodek A."/>
            <person name="Gong F."/>
            <person name="Gorrell J.H."/>
            <person name="Gu Z."/>
            <person name="Guan P."/>
            <person name="Harris M."/>
            <person name="Harris N.L."/>
            <person name="Harvey D.A."/>
            <person name="Heiman T.J."/>
            <person name="Hernandez J.R."/>
            <person name="Houck J."/>
            <person name="Hostin D."/>
            <person name="Houston K.A."/>
            <person name="Howland T.J."/>
            <person name="Wei M.-H."/>
            <person name="Ibegwam C."/>
            <person name="Jalali M."/>
            <person name="Kalush F."/>
            <person name="Karpen G.H."/>
            <person name="Ke Z."/>
            <person name="Kennison J.A."/>
            <person name="Ketchum K.A."/>
            <person name="Kimmel B.E."/>
            <person name="Kodira C.D."/>
            <person name="Kraft C.L."/>
            <person name="Kravitz S."/>
            <person name="Kulp D."/>
            <person name="Lai Z."/>
            <person name="Lasko P."/>
            <person name="Lei Y."/>
            <person name="Levitsky A.A."/>
            <person name="Li J.H."/>
            <person name="Li Z."/>
            <person name="Liang Y."/>
            <person name="Lin X."/>
            <person name="Liu X."/>
            <person name="Mattei B."/>
            <person name="McIntosh T.C."/>
            <person name="McLeod M.P."/>
            <person name="McPherson D."/>
            <person name="Merkulov G."/>
            <person name="Milshina N.V."/>
            <person name="Mobarry C."/>
            <person name="Morris J."/>
            <person name="Moshrefi A."/>
            <person name="Mount S.M."/>
            <person name="Moy M."/>
            <person name="Murphy B."/>
            <person name="Murphy L."/>
            <person name="Muzny D.M."/>
            <person name="Nelson D.L."/>
            <person name="Nelson D.R."/>
            <person name="Nelson K.A."/>
            <person name="Nixon K."/>
            <person name="Nusskern D.R."/>
            <person name="Pacleb J.M."/>
            <person name="Palazzolo M."/>
            <person name="Pittman G.S."/>
            <person name="Pan S."/>
            <person name="Pollard J."/>
            <person name="Puri V."/>
            <person name="Reese M.G."/>
            <person name="Reinert K."/>
            <person name="Remington K."/>
            <person name="Saunders R.D.C."/>
            <person name="Scheeler F."/>
            <person name="Shen H."/>
            <person name="Shue B.C."/>
            <person name="Siden-Kiamos I."/>
            <person name="Simpson M."/>
            <person name="Skupski M.P."/>
            <person name="Smith T.J."/>
            <person name="Spier E."/>
            <person name="Spradling A.C."/>
            <person name="Stapleton M."/>
            <person name="Strong R."/>
            <person name="Sun E."/>
            <person name="Svirskas R."/>
            <person name="Tector C."/>
            <person name="Turner R."/>
            <person name="Venter E."/>
            <person name="Wang A.H."/>
            <person name="Wang X."/>
            <person name="Wang Z.-Y."/>
            <person name="Wassarman D.A."/>
            <person name="Weinstock G.M."/>
            <person name="Weissenbach J."/>
            <person name="Williams S.M."/>
            <person name="Woodage T."/>
            <person name="Worley K.C."/>
            <person name="Wu D."/>
            <person name="Yang S."/>
            <person name="Yao Q.A."/>
            <person name="Ye J."/>
            <person name="Yeh R.-F."/>
            <person name="Zaveri J.S."/>
            <person name="Zhan M."/>
            <person name="Zhang G."/>
            <person name="Zhao Q."/>
            <person name="Zheng L."/>
            <person name="Zheng X.H."/>
            <person name="Zhong F.N."/>
            <person name="Zhong W."/>
            <person name="Zhou X."/>
            <person name="Zhu S.C."/>
            <person name="Zhu X."/>
            <person name="Smith H.O."/>
            <person name="Gibbs R.A."/>
            <person name="Myers E.W."/>
            <person name="Rubin G.M."/>
            <person name="Venter J.C."/>
        </authorList>
    </citation>
    <scope>NUCLEOTIDE SEQUENCE [LARGE SCALE GENOMIC DNA]</scope>
    <source>
        <strain>Berkeley</strain>
    </source>
</reference>
<reference key="4">
    <citation type="journal article" date="2002" name="Genome Biol.">
        <title>Annotation of the Drosophila melanogaster euchromatic genome: a systematic review.</title>
        <authorList>
            <person name="Misra S."/>
            <person name="Crosby M.A."/>
            <person name="Mungall C.J."/>
            <person name="Matthews B.B."/>
            <person name="Campbell K.S."/>
            <person name="Hradecky P."/>
            <person name="Huang Y."/>
            <person name="Kaminker J.S."/>
            <person name="Millburn G.H."/>
            <person name="Prochnik S.E."/>
            <person name="Smith C.D."/>
            <person name="Tupy J.L."/>
            <person name="Whitfield E.J."/>
            <person name="Bayraktaroglu L."/>
            <person name="Berman B.P."/>
            <person name="Bettencourt B.R."/>
            <person name="Celniker S.E."/>
            <person name="de Grey A.D.N.J."/>
            <person name="Drysdale R.A."/>
            <person name="Harris N.L."/>
            <person name="Richter J."/>
            <person name="Russo S."/>
            <person name="Schroeder A.J."/>
            <person name="Shu S.Q."/>
            <person name="Stapleton M."/>
            <person name="Yamada C."/>
            <person name="Ashburner M."/>
            <person name="Gelbart W.M."/>
            <person name="Rubin G.M."/>
            <person name="Lewis S.E."/>
        </authorList>
    </citation>
    <scope>GENOME REANNOTATION</scope>
    <source>
        <strain>Berkeley</strain>
    </source>
</reference>
<reference key="5">
    <citation type="journal article" date="2004" name="Dev. Cell">
        <title>Opposing activities of Dally-like glypican at high and low levels of Wingless morphogen activity.</title>
        <authorList>
            <person name="Kreuger J."/>
            <person name="Perez L."/>
            <person name="Giraldez A.J."/>
            <person name="Cohen S.M."/>
        </authorList>
    </citation>
    <scope>PRELIMINARY FUNCTION</scope>
</reference>
<reference key="6">
    <citation type="journal article" date="2010" name="Dev. Cell">
        <title>The long-range activity of Hedgehog is regulated in the apical extracellular space by the glypican Dally and the hydrolase Notum.</title>
        <authorList>
            <person name="Ayers K.L."/>
            <person name="Gallet A."/>
            <person name="Staccini-Lavenant L."/>
            <person name="Therond P.P."/>
        </authorList>
    </citation>
    <scope>FUNCTION</scope>
</reference>
<reference key="7">
    <citation type="journal article" date="2012" name="Development">
        <title>Dally and Notum regulate the switch between low and high level Hedgehog pathway signalling.</title>
        <authorList>
            <person name="Ayers K.L."/>
            <person name="Mteirek R."/>
            <person name="Cervantes A."/>
            <person name="Lavenant-Staccini L."/>
            <person name="Therond P.P."/>
            <person name="Gallet A."/>
        </authorList>
    </citation>
    <scope>FUNCTION</scope>
</reference>
<reference key="8">
    <citation type="journal article" date="2015" name="Nature">
        <title>Notum deacylates Wnt proteins to suppress signalling activity.</title>
        <authorList>
            <person name="Kakugawa S."/>
            <person name="Langton P.F."/>
            <person name="Zebisch M."/>
            <person name="Howell S.A."/>
            <person name="Chang T.H."/>
            <person name="Liu Y."/>
            <person name="Feizi T."/>
            <person name="Bineva G."/>
            <person name="O'Reilly N."/>
            <person name="Snijders A.P."/>
            <person name="Jones E.Y."/>
            <person name="Vincent J.P."/>
        </authorList>
    </citation>
    <scope>X-RAY CRYSTALLOGRAPHY (1.9 ANGSTROMS) OF 82-415 AND 598-617</scope>
    <scope>FUNCTION</scope>
    <scope>SUBCELLULAR LOCATION</scope>
    <scope>GLYCOSYLATION AT ASN-95</scope>
    <scope>MUTAGENESIS OF SER-237</scope>
</reference>
<name>NOTUM_DROME</name>
<accession>Q9VUX3</accession>
<accession>Q8T385</accession>
<proteinExistence type="evidence at protein level"/>
<protein>
    <recommendedName>
        <fullName evidence="13">Palmitoleoyl-protein carboxylesterase NOTUM</fullName>
        <ecNumber evidence="1">3.1.1.98</ecNumber>
    </recommendedName>
    <alternativeName>
        <fullName evidence="11">Protein Notum</fullName>
    </alternativeName>
    <alternativeName>
        <fullName evidence="10">Protein wingful</fullName>
    </alternativeName>
    <alternativeName>
        <fullName evidence="12">dNOTUM</fullName>
    </alternativeName>
</protein>
<dbReference type="EC" id="3.1.1.98" evidence="1"/>
<dbReference type="EMBL" id="AJ457833">
    <property type="protein sequence ID" value="CAD29885.1"/>
    <property type="molecule type" value="mRNA"/>
</dbReference>
<dbReference type="EMBL" id="AY078993">
    <property type="protein sequence ID" value="AAL85497.1"/>
    <property type="molecule type" value="mRNA"/>
</dbReference>
<dbReference type="EMBL" id="AE014296">
    <property type="protein sequence ID" value="AAF49550.3"/>
    <property type="molecule type" value="Genomic_DNA"/>
</dbReference>
<dbReference type="RefSeq" id="NP_730096.2">
    <property type="nucleotide sequence ID" value="NM_168643.3"/>
</dbReference>
<dbReference type="PDB" id="4UZJ">
    <property type="method" value="X-ray"/>
    <property type="resolution" value="2.40 A"/>
    <property type="chains" value="A/B=86-415, A/B=598-617"/>
</dbReference>
<dbReference type="PDB" id="4UZK">
    <property type="method" value="X-ray"/>
    <property type="resolution" value="1.90 A"/>
    <property type="chains" value="A/B=82-415, A/B=598-617"/>
</dbReference>
<dbReference type="PDBsum" id="4UZJ"/>
<dbReference type="PDBsum" id="4UZK"/>
<dbReference type="SMR" id="Q9VUX3"/>
<dbReference type="DIP" id="DIP-61510N"/>
<dbReference type="FunCoup" id="Q9VUX3">
    <property type="interactions" value="114"/>
</dbReference>
<dbReference type="IntAct" id="Q9VUX3">
    <property type="interactions" value="2"/>
</dbReference>
<dbReference type="STRING" id="7227.FBpp0075193"/>
<dbReference type="ESTHER" id="drome-q9vux3">
    <property type="family name" value="Pectinacetylesterase-Notum"/>
</dbReference>
<dbReference type="GlyCosmos" id="Q9VUX3">
    <property type="glycosylation" value="4 sites, No reported glycans"/>
</dbReference>
<dbReference type="GlyGen" id="Q9VUX3">
    <property type="glycosylation" value="4 sites"/>
</dbReference>
<dbReference type="iPTMnet" id="Q9VUX3"/>
<dbReference type="PaxDb" id="7227-FBpp0075193"/>
<dbReference type="EnsemblMetazoa" id="FBtr0075435">
    <property type="protein sequence ID" value="FBpp0075193"/>
    <property type="gene ID" value="FBgn0044028"/>
</dbReference>
<dbReference type="GeneID" id="39751"/>
<dbReference type="KEGG" id="dme:Dmel_CG13076"/>
<dbReference type="UCSC" id="CG13076-RA">
    <property type="organism name" value="d. melanogaster"/>
</dbReference>
<dbReference type="AGR" id="FB:FBgn0044028"/>
<dbReference type="CTD" id="147111"/>
<dbReference type="FlyBase" id="FBgn0044028">
    <property type="gene designation" value="Notum"/>
</dbReference>
<dbReference type="VEuPathDB" id="VectorBase:FBgn0044028"/>
<dbReference type="eggNOG" id="KOG4287">
    <property type="taxonomic scope" value="Eukaryota"/>
</dbReference>
<dbReference type="GeneTree" id="ENSGT00940000173033"/>
<dbReference type="HOGENOM" id="CLU_026533_1_1_1"/>
<dbReference type="InParanoid" id="Q9VUX3"/>
<dbReference type="OMA" id="SKRDWVN"/>
<dbReference type="OrthoDB" id="2015280at2759"/>
<dbReference type="PhylomeDB" id="Q9VUX3"/>
<dbReference type="BRENDA" id="3.1.1.98">
    <property type="organism ID" value="1994"/>
</dbReference>
<dbReference type="Reactome" id="R-DME-381426">
    <property type="pathway name" value="Regulation of Insulin-like Growth Factor (IGF) transport and uptake by Insulin-like Growth Factor Binding Proteins (IGFBPs)"/>
</dbReference>
<dbReference type="Reactome" id="R-DME-5362798">
    <property type="pathway name" value="Release of Hh-Np from the secreting cell"/>
</dbReference>
<dbReference type="Reactome" id="R-DME-8957275">
    <property type="pathway name" value="Post-translational protein phosphorylation"/>
</dbReference>
<dbReference type="BioGRID-ORCS" id="39751">
    <property type="hits" value="0 hits in 1 CRISPR screen"/>
</dbReference>
<dbReference type="EvolutionaryTrace" id="Q9VUX3"/>
<dbReference type="GenomeRNAi" id="39751"/>
<dbReference type="PRO" id="PR:Q9VUX3"/>
<dbReference type="Proteomes" id="UP000000803">
    <property type="component" value="Chromosome 3L"/>
</dbReference>
<dbReference type="Bgee" id="FBgn0044028">
    <property type="expression patterns" value="Expressed in escort cell (Drosophila) in ovary and 43 other cell types or tissues"/>
</dbReference>
<dbReference type="GO" id="GO:0009986">
    <property type="term" value="C:cell surface"/>
    <property type="evidence" value="ECO:0007669"/>
    <property type="project" value="UniProtKB-SubCell"/>
</dbReference>
<dbReference type="GO" id="GO:0005615">
    <property type="term" value="C:extracellular space"/>
    <property type="evidence" value="ECO:0000314"/>
    <property type="project" value="UniProtKB"/>
</dbReference>
<dbReference type="GO" id="GO:1990699">
    <property type="term" value="F:palmitoleyl hydrolase activity"/>
    <property type="evidence" value="ECO:0000250"/>
    <property type="project" value="UniProtKB"/>
</dbReference>
<dbReference type="GO" id="GO:0048546">
    <property type="term" value="P:digestive tract morphogenesis"/>
    <property type="evidence" value="ECO:0000315"/>
    <property type="project" value="FlyBase"/>
</dbReference>
<dbReference type="GO" id="GO:0090090">
    <property type="term" value="P:negative regulation of canonical Wnt signaling pathway"/>
    <property type="evidence" value="ECO:0000314"/>
    <property type="project" value="UniProtKB"/>
</dbReference>
<dbReference type="GO" id="GO:0045880">
    <property type="term" value="P:positive regulation of smoothened signaling pathway"/>
    <property type="evidence" value="ECO:0000315"/>
    <property type="project" value="FlyBase"/>
</dbReference>
<dbReference type="GO" id="GO:1990697">
    <property type="term" value="P:protein depalmitoleylation"/>
    <property type="evidence" value="ECO:0000250"/>
    <property type="project" value="UniProtKB"/>
</dbReference>
<dbReference type="GO" id="GO:0048076">
    <property type="term" value="P:regulation of compound eye pigmentation"/>
    <property type="evidence" value="ECO:0000315"/>
    <property type="project" value="FlyBase"/>
</dbReference>
<dbReference type="GO" id="GO:0007419">
    <property type="term" value="P:ventral cord development"/>
    <property type="evidence" value="ECO:0007001"/>
    <property type="project" value="FlyBase"/>
</dbReference>
<dbReference type="GO" id="GO:0035220">
    <property type="term" value="P:wing disc development"/>
    <property type="evidence" value="ECO:0000315"/>
    <property type="project" value="FlyBase"/>
</dbReference>
<dbReference type="GO" id="GO:0048190">
    <property type="term" value="P:wing disc dorsal/ventral pattern formation"/>
    <property type="evidence" value="ECO:0000316"/>
    <property type="project" value="FlyBase"/>
</dbReference>
<dbReference type="GO" id="GO:0035222">
    <property type="term" value="P:wing disc pattern formation"/>
    <property type="evidence" value="ECO:0000315"/>
    <property type="project" value="FlyBase"/>
</dbReference>
<dbReference type="GO" id="GO:0016055">
    <property type="term" value="P:Wnt signaling pathway"/>
    <property type="evidence" value="ECO:0007669"/>
    <property type="project" value="UniProtKB-KW"/>
</dbReference>
<dbReference type="InterPro" id="IPR004963">
    <property type="entry name" value="PAE/NOTUM"/>
</dbReference>
<dbReference type="PANTHER" id="PTHR21562">
    <property type="entry name" value="NOTUM-RELATED"/>
    <property type="match status" value="1"/>
</dbReference>
<dbReference type="PANTHER" id="PTHR21562:SF122">
    <property type="entry name" value="PALMITOLEOYL-PROTEIN CARBOXYLESTERASE NOTUM"/>
    <property type="match status" value="1"/>
</dbReference>
<dbReference type="Pfam" id="PF03283">
    <property type="entry name" value="PAE"/>
    <property type="match status" value="1"/>
</dbReference>
<feature type="signal peptide" evidence="2">
    <location>
        <begin position="1"/>
        <end position="46"/>
    </location>
</feature>
<feature type="chain" id="PRO_0000432994" description="Palmitoleoyl-protein carboxylesterase NOTUM" evidence="2">
    <location>
        <begin position="47"/>
        <end position="671"/>
    </location>
</feature>
<feature type="region of interest" description="Disordered" evidence="4">
    <location>
        <begin position="411"/>
        <end position="592"/>
    </location>
</feature>
<feature type="compositionally biased region" description="Basic residues" evidence="4">
    <location>
        <begin position="439"/>
        <end position="454"/>
    </location>
</feature>
<feature type="compositionally biased region" description="Basic and acidic residues" evidence="4">
    <location>
        <begin position="470"/>
        <end position="486"/>
    </location>
</feature>
<feature type="compositionally biased region" description="Basic residues" evidence="4">
    <location>
        <begin position="487"/>
        <end position="497"/>
    </location>
</feature>
<feature type="compositionally biased region" description="Basic and acidic residues" evidence="4">
    <location>
        <begin position="505"/>
        <end position="514"/>
    </location>
</feature>
<feature type="compositionally biased region" description="Polar residues" evidence="4">
    <location>
        <begin position="570"/>
        <end position="583"/>
    </location>
</feature>
<feature type="active site" description="Charge relay system" evidence="1">
    <location>
        <position position="237"/>
    </location>
</feature>
<feature type="active site" description="Charge relay system" evidence="1">
    <location>
        <position position="338"/>
    </location>
</feature>
<feature type="active site" description="Charge relay system" evidence="1">
    <location>
        <position position="384"/>
    </location>
</feature>
<feature type="glycosylation site" description="N-linked (GlcNAc...) asparagine" evidence="9 18 19">
    <location>
        <position position="95"/>
    </location>
</feature>
<feature type="glycosylation site" description="N-linked (GlcNAc...) asparagine" evidence="3">
    <location>
        <position position="372"/>
    </location>
</feature>
<feature type="glycosylation site" description="N-linked (GlcNAc...) asparagine" evidence="3">
    <location>
        <position position="578"/>
    </location>
</feature>
<feature type="glycosylation site" description="N-linked (GlcNAc...) asparagine" evidence="3">
    <location>
        <position position="612"/>
    </location>
</feature>
<feature type="mutagenesis site" description="Impaired ability to inhibit the Wnt signaling pathway." evidence="9">
    <original>S</original>
    <variation>A</variation>
    <location>
        <position position="237"/>
    </location>
</feature>
<feature type="strand" evidence="21">
    <location>
        <begin position="88"/>
        <end position="92"/>
    </location>
</feature>
<feature type="strand" evidence="21">
    <location>
        <begin position="107"/>
        <end position="111"/>
    </location>
</feature>
<feature type="strand" evidence="21">
    <location>
        <begin position="118"/>
        <end position="123"/>
    </location>
</feature>
<feature type="helix" evidence="21">
    <location>
        <begin position="132"/>
        <end position="141"/>
    </location>
</feature>
<feature type="helix" evidence="21">
    <location>
        <begin position="143"/>
        <end position="145"/>
    </location>
</feature>
<feature type="strand" evidence="21">
    <location>
        <begin position="153"/>
        <end position="155"/>
    </location>
</feature>
<feature type="helix" evidence="21">
    <location>
        <begin position="159"/>
        <end position="161"/>
    </location>
</feature>
<feature type="turn" evidence="21">
    <location>
        <begin position="165"/>
        <end position="167"/>
    </location>
</feature>
<feature type="turn" evidence="21">
    <location>
        <begin position="169"/>
        <end position="173"/>
    </location>
</feature>
<feature type="strand" evidence="21">
    <location>
        <begin position="174"/>
        <end position="179"/>
    </location>
</feature>
<feature type="strand" evidence="21">
    <location>
        <begin position="183"/>
        <end position="185"/>
    </location>
</feature>
<feature type="strand" evidence="21">
    <location>
        <begin position="191"/>
        <end position="193"/>
    </location>
</feature>
<feature type="helix" evidence="21">
    <location>
        <begin position="207"/>
        <end position="218"/>
    </location>
</feature>
<feature type="helix" evidence="21">
    <location>
        <begin position="219"/>
        <end position="221"/>
    </location>
</feature>
<feature type="turn" evidence="21">
    <location>
        <begin position="222"/>
        <end position="224"/>
    </location>
</feature>
<feature type="strand" evidence="21">
    <location>
        <begin position="229"/>
        <end position="236"/>
    </location>
</feature>
<feature type="helix" evidence="21">
    <location>
        <begin position="238"/>
        <end position="255"/>
    </location>
</feature>
<feature type="strand" evidence="21">
    <location>
        <begin position="262"/>
        <end position="270"/>
    </location>
</feature>
<feature type="helix" evidence="21">
    <location>
        <begin position="286"/>
        <end position="297"/>
    </location>
</feature>
<feature type="helix" evidence="21">
    <location>
        <begin position="303"/>
        <end position="308"/>
    </location>
</feature>
<feature type="strand" evidence="20">
    <location>
        <begin position="309"/>
        <end position="311"/>
    </location>
</feature>
<feature type="helix" evidence="21">
    <location>
        <begin position="313"/>
        <end position="317"/>
    </location>
</feature>
<feature type="helix" evidence="21">
    <location>
        <begin position="319"/>
        <end position="322"/>
    </location>
</feature>
<feature type="helix" evidence="21">
    <location>
        <begin position="323"/>
        <end position="325"/>
    </location>
</feature>
<feature type="strand" evidence="21">
    <location>
        <begin position="330"/>
        <end position="333"/>
    </location>
</feature>
<feature type="helix" evidence="21">
    <location>
        <begin position="339"/>
        <end position="344"/>
    </location>
</feature>
<feature type="helix" evidence="21">
    <location>
        <begin position="353"/>
        <end position="369"/>
    </location>
</feature>
<feature type="turn" evidence="21">
    <location>
        <begin position="370"/>
        <end position="372"/>
    </location>
</feature>
<feature type="strand" evidence="21">
    <location>
        <begin position="374"/>
        <end position="378"/>
    </location>
</feature>
<feature type="strand" evidence="21">
    <location>
        <begin position="380"/>
        <end position="384"/>
    </location>
</feature>
<feature type="helix" evidence="21">
    <location>
        <begin position="390"/>
        <end position="393"/>
    </location>
</feature>
<feature type="helix" evidence="21">
    <location>
        <begin position="402"/>
        <end position="412"/>
    </location>
</feature>
<feature type="strand" evidence="21">
    <location>
        <begin position="601"/>
        <end position="603"/>
    </location>
</feature>
<evidence type="ECO:0000250" key="1">
    <source>
        <dbReference type="UniProtKB" id="Q6P988"/>
    </source>
</evidence>
<evidence type="ECO:0000255" key="2"/>
<evidence type="ECO:0000255" key="3">
    <source>
        <dbReference type="PROSITE-ProRule" id="PRU00498"/>
    </source>
</evidence>
<evidence type="ECO:0000256" key="4">
    <source>
        <dbReference type="SAM" id="MobiDB-lite"/>
    </source>
</evidence>
<evidence type="ECO:0000269" key="5">
    <source>
    </source>
</evidence>
<evidence type="ECO:0000269" key="6">
    <source>
    </source>
</evidence>
<evidence type="ECO:0000269" key="7">
    <source>
    </source>
</evidence>
<evidence type="ECO:0000269" key="8">
    <source>
    </source>
</evidence>
<evidence type="ECO:0000269" key="9">
    <source>
    </source>
</evidence>
<evidence type="ECO:0000303" key="10">
    <source>
    </source>
</evidence>
<evidence type="ECO:0000303" key="11">
    <source>
    </source>
</evidence>
<evidence type="ECO:0000303" key="12">
    <source>
    </source>
</evidence>
<evidence type="ECO:0000305" key="13"/>
<evidence type="ECO:0000305" key="14">
    <source>
    </source>
</evidence>
<evidence type="ECO:0000305" key="15">
    <source>
    </source>
</evidence>
<evidence type="ECO:0000305" key="16">
    <source>
    </source>
</evidence>
<evidence type="ECO:0000312" key="17">
    <source>
        <dbReference type="FlyBase" id="FBgn0044028"/>
    </source>
</evidence>
<evidence type="ECO:0007744" key="18">
    <source>
        <dbReference type="PDB" id="4UZJ"/>
    </source>
</evidence>
<evidence type="ECO:0007744" key="19">
    <source>
        <dbReference type="PDB" id="4UZK"/>
    </source>
</evidence>
<evidence type="ECO:0007829" key="20">
    <source>
        <dbReference type="PDB" id="4UZJ"/>
    </source>
</evidence>
<evidence type="ECO:0007829" key="21">
    <source>
        <dbReference type="PDB" id="4UZK"/>
    </source>
</evidence>